<comment type="function">
    <text evidence="1">Required for synthesis of pyridoxal-5-phosphate from vitamin B6.</text>
</comment>
<comment type="catalytic activity">
    <reaction evidence="1">
        <text>pyridoxal + ATP = pyridoxal 5'-phosphate + ADP + H(+)</text>
        <dbReference type="Rhea" id="RHEA:10224"/>
        <dbReference type="ChEBI" id="CHEBI:15378"/>
        <dbReference type="ChEBI" id="CHEBI:17310"/>
        <dbReference type="ChEBI" id="CHEBI:30616"/>
        <dbReference type="ChEBI" id="CHEBI:456216"/>
        <dbReference type="ChEBI" id="CHEBI:597326"/>
        <dbReference type="EC" id="2.7.1.35"/>
    </reaction>
</comment>
<comment type="cofactor">
    <cofactor evidence="1">
        <name>Zn(2+)</name>
        <dbReference type="ChEBI" id="CHEBI:29105"/>
    </cofactor>
    <cofactor evidence="1">
        <name>Mg(2+)</name>
        <dbReference type="ChEBI" id="CHEBI:18420"/>
    </cofactor>
    <text evidence="1">Divalent metal cations. Zn(2+) is more efficient than Mg(2+).</text>
</comment>
<comment type="similarity">
    <text evidence="3">Belongs to the pyridoxine kinase family.</text>
</comment>
<organism>
    <name type="scientific">Caenorhabditis elegans</name>
    <dbReference type="NCBI Taxonomy" id="6239"/>
    <lineage>
        <taxon>Eukaryota</taxon>
        <taxon>Metazoa</taxon>
        <taxon>Ecdysozoa</taxon>
        <taxon>Nematoda</taxon>
        <taxon>Chromadorea</taxon>
        <taxon>Rhabditida</taxon>
        <taxon>Rhabditina</taxon>
        <taxon>Rhabditomorpha</taxon>
        <taxon>Rhabditoidea</taxon>
        <taxon>Rhabditidae</taxon>
        <taxon>Peloderinae</taxon>
        <taxon>Caenorhabditis</taxon>
    </lineage>
</organism>
<accession>O01824</accession>
<name>PDXK_CAEEL</name>
<protein>
    <recommendedName>
        <fullName>Putative pyridoxal kinase</fullName>
        <ecNumber evidence="1">2.7.1.35</ecNumber>
    </recommendedName>
    <alternativeName>
        <fullName>Pyridoxine kinase</fullName>
    </alternativeName>
</protein>
<keyword id="KW-0067">ATP-binding</keyword>
<keyword id="KW-0418">Kinase</keyword>
<keyword id="KW-0479">Metal-binding</keyword>
<keyword id="KW-0547">Nucleotide-binding</keyword>
<keyword id="KW-1185">Reference proteome</keyword>
<keyword id="KW-0808">Transferase</keyword>
<keyword id="KW-0862">Zinc</keyword>
<feature type="chain" id="PRO_0000213340" description="Putative pyridoxal kinase">
    <location>
        <begin position="1"/>
        <end position="321"/>
    </location>
</feature>
<feature type="binding site" evidence="2">
    <location>
        <position position="23"/>
    </location>
    <ligand>
        <name>substrate</name>
    </ligand>
</feature>
<feature type="binding site" evidence="2">
    <location>
        <position position="144"/>
    </location>
    <ligand>
        <name>substrate</name>
    </ligand>
</feature>
<feature type="binding site" evidence="2">
    <location>
        <begin position="203"/>
        <end position="204"/>
    </location>
    <ligand>
        <name>ATP</name>
        <dbReference type="ChEBI" id="CHEBI:30616"/>
    </ligand>
</feature>
<feature type="binding site" evidence="2">
    <location>
        <begin position="230"/>
        <end position="242"/>
    </location>
    <ligand>
        <name>ATP</name>
        <dbReference type="ChEBI" id="CHEBI:30616"/>
    </ligand>
</feature>
<feature type="binding site" evidence="2">
    <location>
        <position position="243"/>
    </location>
    <ligand>
        <name>substrate</name>
    </ligand>
</feature>
<evidence type="ECO:0000250" key="1">
    <source>
        <dbReference type="UniProtKB" id="O46560"/>
    </source>
</evidence>
<evidence type="ECO:0000250" key="2">
    <source>
        <dbReference type="UniProtKB" id="P82197"/>
    </source>
</evidence>
<evidence type="ECO:0000305" key="3"/>
<evidence type="ECO:0000312" key="4">
    <source>
        <dbReference type="WormBase" id="F57C9.1a"/>
    </source>
</evidence>
<reference key="1">
    <citation type="journal article" date="1998" name="Science">
        <title>Genome sequence of the nematode C. elegans: a platform for investigating biology.</title>
        <authorList>
            <consortium name="The C. elegans sequencing consortium"/>
        </authorList>
    </citation>
    <scope>NUCLEOTIDE SEQUENCE [LARGE SCALE GENOMIC DNA]</scope>
    <source>
        <strain>Bristol N2</strain>
    </source>
</reference>
<gene>
    <name evidence="4" type="primary">pdxk-1</name>
    <name evidence="4" type="ORF">F57C9.1</name>
</gene>
<sequence length="321" mass="35986">MSSSELIAELERERDRRVLSIQSHVVHGYAGNKCSVFPLQLHGFEVDFINSVQFSNHAGNIEYLTLPTRYEHVKGQKLTEKELEELYEGLTLNNINNYTHVLTGYCGNVTFLQKIADVVKDLKKKNGNTTFVCDPVMGDNGRYYTPKELMPVYRDLIIPLADVLTPNAFELGELTGSPIETEEDCLRAVNELHAKGVKTVVVTSGVTGAQTNESLRCYASVKGSHVYRFTFPRLVGQFVGTGDTFTSLLVVWLDELNGDVSEAVKRVLASMQCLIRKTSSYAQLQVDTNSRAMCELRLIQSRKDLLWPPTCDQIQVEKIGQ</sequence>
<proteinExistence type="inferred from homology"/>
<dbReference type="EC" id="2.7.1.35" evidence="1"/>
<dbReference type="EMBL" id="FO080263">
    <property type="protein sequence ID" value="CCD62433.2"/>
    <property type="molecule type" value="Genomic_DNA"/>
</dbReference>
<dbReference type="PIR" id="T15219">
    <property type="entry name" value="T15219"/>
</dbReference>
<dbReference type="RefSeq" id="NP_491463.2">
    <property type="nucleotide sequence ID" value="NM_059062.4"/>
</dbReference>
<dbReference type="SMR" id="O01824"/>
<dbReference type="FunCoup" id="O01824">
    <property type="interactions" value="1309"/>
</dbReference>
<dbReference type="STRING" id="6239.F57C9.1b.1"/>
<dbReference type="PaxDb" id="6239-F57C9.1b"/>
<dbReference type="EnsemblMetazoa" id="F57C9.1a.1">
    <property type="protein sequence ID" value="F57C9.1a.1"/>
    <property type="gene ID" value="WBGene00019008"/>
</dbReference>
<dbReference type="GeneID" id="172101"/>
<dbReference type="KEGG" id="cel:CELE_F57C9.1"/>
<dbReference type="UCSC" id="F57C9.1b">
    <property type="organism name" value="c. elegans"/>
</dbReference>
<dbReference type="AGR" id="WB:WBGene00019008"/>
<dbReference type="CTD" id="172101"/>
<dbReference type="WormBase" id="F57C9.1a">
    <property type="protein sequence ID" value="CE46957"/>
    <property type="gene ID" value="WBGene00019008"/>
    <property type="gene designation" value="pdxk-1"/>
</dbReference>
<dbReference type="eggNOG" id="KOG2599">
    <property type="taxonomic scope" value="Eukaryota"/>
</dbReference>
<dbReference type="GeneTree" id="ENSGT00390000003874"/>
<dbReference type="HOGENOM" id="CLU_046496_1_1_1"/>
<dbReference type="InParanoid" id="O01824"/>
<dbReference type="OrthoDB" id="2104723at2759"/>
<dbReference type="PhylomeDB" id="O01824"/>
<dbReference type="Reactome" id="R-CEL-6798695">
    <property type="pathway name" value="Neutrophil degranulation"/>
</dbReference>
<dbReference type="Reactome" id="R-CEL-964975">
    <property type="pathway name" value="Vitamin B6 activation to pyridoxal phosphate"/>
</dbReference>
<dbReference type="PRO" id="PR:O01824"/>
<dbReference type="Proteomes" id="UP000001940">
    <property type="component" value="Chromosome I"/>
</dbReference>
<dbReference type="Bgee" id="WBGene00019008">
    <property type="expression patterns" value="Expressed in germ line (C elegans) and 4 other cell types or tissues"/>
</dbReference>
<dbReference type="ExpressionAtlas" id="O01824">
    <property type="expression patterns" value="baseline and differential"/>
</dbReference>
<dbReference type="GO" id="GO:0005829">
    <property type="term" value="C:cytosol"/>
    <property type="evidence" value="ECO:0000318"/>
    <property type="project" value="GO_Central"/>
</dbReference>
<dbReference type="GO" id="GO:0005524">
    <property type="term" value="F:ATP binding"/>
    <property type="evidence" value="ECO:0007669"/>
    <property type="project" value="UniProtKB-KW"/>
</dbReference>
<dbReference type="GO" id="GO:0046872">
    <property type="term" value="F:metal ion binding"/>
    <property type="evidence" value="ECO:0007669"/>
    <property type="project" value="UniProtKB-KW"/>
</dbReference>
<dbReference type="GO" id="GO:0008478">
    <property type="term" value="F:pyridoxal kinase activity"/>
    <property type="evidence" value="ECO:0000318"/>
    <property type="project" value="GO_Central"/>
</dbReference>
<dbReference type="GO" id="GO:0009443">
    <property type="term" value="P:pyridoxal 5'-phosphate salvage"/>
    <property type="evidence" value="ECO:0000318"/>
    <property type="project" value="GO_Central"/>
</dbReference>
<dbReference type="CDD" id="cd01173">
    <property type="entry name" value="pyridoxal_pyridoxamine_kinase"/>
    <property type="match status" value="1"/>
</dbReference>
<dbReference type="Gene3D" id="3.40.1190.20">
    <property type="match status" value="1"/>
</dbReference>
<dbReference type="InterPro" id="IPR011611">
    <property type="entry name" value="PfkB_dom"/>
</dbReference>
<dbReference type="InterPro" id="IPR004625">
    <property type="entry name" value="PyrdxlKinase"/>
</dbReference>
<dbReference type="InterPro" id="IPR029056">
    <property type="entry name" value="Ribokinase-like"/>
</dbReference>
<dbReference type="NCBIfam" id="TIGR00687">
    <property type="entry name" value="pyridox_kin"/>
    <property type="match status" value="1"/>
</dbReference>
<dbReference type="PANTHER" id="PTHR10534">
    <property type="entry name" value="PYRIDOXAL KINASE"/>
    <property type="match status" value="1"/>
</dbReference>
<dbReference type="PANTHER" id="PTHR10534:SF2">
    <property type="entry name" value="PYRIDOXAL KINASE"/>
    <property type="match status" value="1"/>
</dbReference>
<dbReference type="Pfam" id="PF00294">
    <property type="entry name" value="PfkB"/>
    <property type="match status" value="1"/>
</dbReference>
<dbReference type="SUPFAM" id="SSF53613">
    <property type="entry name" value="Ribokinase-like"/>
    <property type="match status" value="1"/>
</dbReference>